<gene>
    <name evidence="1" type="primary">dapB</name>
    <name type="ordered locus">PM0726</name>
</gene>
<dbReference type="EC" id="1.17.1.8" evidence="1"/>
<dbReference type="EMBL" id="AE004439">
    <property type="protein sequence ID" value="AAK02810.1"/>
    <property type="molecule type" value="Genomic_DNA"/>
</dbReference>
<dbReference type="RefSeq" id="WP_010906819.1">
    <property type="nucleotide sequence ID" value="NC_002663.1"/>
</dbReference>
<dbReference type="SMR" id="P57867"/>
<dbReference type="STRING" id="272843.PM0726"/>
<dbReference type="EnsemblBacteria" id="AAK02810">
    <property type="protein sequence ID" value="AAK02810"/>
    <property type="gene ID" value="PM0726"/>
</dbReference>
<dbReference type="KEGG" id="pmu:PM0726"/>
<dbReference type="PATRIC" id="fig|272843.6.peg.734"/>
<dbReference type="HOGENOM" id="CLU_047479_2_1_6"/>
<dbReference type="OrthoDB" id="9790352at2"/>
<dbReference type="UniPathway" id="UPA00034">
    <property type="reaction ID" value="UER00018"/>
</dbReference>
<dbReference type="Proteomes" id="UP000000809">
    <property type="component" value="Chromosome"/>
</dbReference>
<dbReference type="GO" id="GO:0005829">
    <property type="term" value="C:cytosol"/>
    <property type="evidence" value="ECO:0007669"/>
    <property type="project" value="TreeGrafter"/>
</dbReference>
<dbReference type="GO" id="GO:0008839">
    <property type="term" value="F:4-hydroxy-tetrahydrodipicolinate reductase"/>
    <property type="evidence" value="ECO:0007669"/>
    <property type="project" value="UniProtKB-EC"/>
</dbReference>
<dbReference type="GO" id="GO:0051287">
    <property type="term" value="F:NAD binding"/>
    <property type="evidence" value="ECO:0007669"/>
    <property type="project" value="UniProtKB-UniRule"/>
</dbReference>
<dbReference type="GO" id="GO:0050661">
    <property type="term" value="F:NADP binding"/>
    <property type="evidence" value="ECO:0007669"/>
    <property type="project" value="UniProtKB-UniRule"/>
</dbReference>
<dbReference type="GO" id="GO:0016726">
    <property type="term" value="F:oxidoreductase activity, acting on CH or CH2 groups, NAD or NADP as acceptor"/>
    <property type="evidence" value="ECO:0007669"/>
    <property type="project" value="UniProtKB-UniRule"/>
</dbReference>
<dbReference type="GO" id="GO:0019877">
    <property type="term" value="P:diaminopimelate biosynthetic process"/>
    <property type="evidence" value="ECO:0007669"/>
    <property type="project" value="UniProtKB-UniRule"/>
</dbReference>
<dbReference type="GO" id="GO:0009089">
    <property type="term" value="P:lysine biosynthetic process via diaminopimelate"/>
    <property type="evidence" value="ECO:0007669"/>
    <property type="project" value="UniProtKB-UniRule"/>
</dbReference>
<dbReference type="CDD" id="cd02274">
    <property type="entry name" value="DHDPR_N"/>
    <property type="match status" value="1"/>
</dbReference>
<dbReference type="FunFam" id="3.30.360.10:FF:000004">
    <property type="entry name" value="4-hydroxy-tetrahydrodipicolinate reductase"/>
    <property type="match status" value="1"/>
</dbReference>
<dbReference type="FunFam" id="3.40.50.720:FF:000048">
    <property type="entry name" value="4-hydroxy-tetrahydrodipicolinate reductase"/>
    <property type="match status" value="1"/>
</dbReference>
<dbReference type="Gene3D" id="3.30.360.10">
    <property type="entry name" value="Dihydrodipicolinate Reductase, domain 2"/>
    <property type="match status" value="1"/>
</dbReference>
<dbReference type="Gene3D" id="3.40.50.720">
    <property type="entry name" value="NAD(P)-binding Rossmann-like Domain"/>
    <property type="match status" value="1"/>
</dbReference>
<dbReference type="HAMAP" id="MF_00102">
    <property type="entry name" value="DapB"/>
    <property type="match status" value="1"/>
</dbReference>
<dbReference type="InterPro" id="IPR022663">
    <property type="entry name" value="DapB_C"/>
</dbReference>
<dbReference type="InterPro" id="IPR000846">
    <property type="entry name" value="DapB_N"/>
</dbReference>
<dbReference type="InterPro" id="IPR022664">
    <property type="entry name" value="DapB_N_CS"/>
</dbReference>
<dbReference type="InterPro" id="IPR023940">
    <property type="entry name" value="DHDPR_bac"/>
</dbReference>
<dbReference type="InterPro" id="IPR036291">
    <property type="entry name" value="NAD(P)-bd_dom_sf"/>
</dbReference>
<dbReference type="NCBIfam" id="TIGR00036">
    <property type="entry name" value="dapB"/>
    <property type="match status" value="1"/>
</dbReference>
<dbReference type="PANTHER" id="PTHR20836:SF0">
    <property type="entry name" value="4-HYDROXY-TETRAHYDRODIPICOLINATE REDUCTASE 1, CHLOROPLASTIC-RELATED"/>
    <property type="match status" value="1"/>
</dbReference>
<dbReference type="PANTHER" id="PTHR20836">
    <property type="entry name" value="DIHYDRODIPICOLINATE REDUCTASE"/>
    <property type="match status" value="1"/>
</dbReference>
<dbReference type="Pfam" id="PF05173">
    <property type="entry name" value="DapB_C"/>
    <property type="match status" value="1"/>
</dbReference>
<dbReference type="Pfam" id="PF01113">
    <property type="entry name" value="DapB_N"/>
    <property type="match status" value="1"/>
</dbReference>
<dbReference type="PIRSF" id="PIRSF000161">
    <property type="entry name" value="DHPR"/>
    <property type="match status" value="1"/>
</dbReference>
<dbReference type="SUPFAM" id="SSF55347">
    <property type="entry name" value="Glyceraldehyde-3-phosphate dehydrogenase-like, C-terminal domain"/>
    <property type="match status" value="1"/>
</dbReference>
<dbReference type="SUPFAM" id="SSF51735">
    <property type="entry name" value="NAD(P)-binding Rossmann-fold domains"/>
    <property type="match status" value="1"/>
</dbReference>
<dbReference type="PROSITE" id="PS01298">
    <property type="entry name" value="DAPB"/>
    <property type="match status" value="1"/>
</dbReference>
<accession>P57867</accession>
<evidence type="ECO:0000255" key="1">
    <source>
        <dbReference type="HAMAP-Rule" id="MF_00102"/>
    </source>
</evidence>
<evidence type="ECO:0000305" key="2"/>
<keyword id="KW-0028">Amino-acid biosynthesis</keyword>
<keyword id="KW-0963">Cytoplasm</keyword>
<keyword id="KW-0220">Diaminopimelate biosynthesis</keyword>
<keyword id="KW-0457">Lysine biosynthesis</keyword>
<keyword id="KW-0520">NAD</keyword>
<keyword id="KW-0521">NADP</keyword>
<keyword id="KW-0560">Oxidoreductase</keyword>
<keyword id="KW-1185">Reference proteome</keyword>
<protein>
    <recommendedName>
        <fullName evidence="1">4-hydroxy-tetrahydrodipicolinate reductase</fullName>
        <shortName evidence="1">HTPA reductase</shortName>
        <ecNumber evidence="1">1.17.1.8</ecNumber>
    </recommendedName>
</protein>
<reference key="1">
    <citation type="journal article" date="2001" name="Proc. Natl. Acad. Sci. U.S.A.">
        <title>Complete genomic sequence of Pasteurella multocida Pm70.</title>
        <authorList>
            <person name="May B.J."/>
            <person name="Zhang Q."/>
            <person name="Li L.L."/>
            <person name="Paustian M.L."/>
            <person name="Whittam T.S."/>
            <person name="Kapur V."/>
        </authorList>
    </citation>
    <scope>NUCLEOTIDE SEQUENCE [LARGE SCALE GENOMIC DNA]</scope>
    <source>
        <strain>Pm70</strain>
    </source>
</reference>
<name>DAPB_PASMU</name>
<proteinExistence type="inferred from homology"/>
<feature type="chain" id="PRO_0000141463" description="4-hydroxy-tetrahydrodipicolinate reductase">
    <location>
        <begin position="1"/>
        <end position="270"/>
    </location>
</feature>
<feature type="active site" description="Proton donor/acceptor" evidence="1">
    <location>
        <position position="156"/>
    </location>
</feature>
<feature type="active site" description="Proton donor" evidence="1">
    <location>
        <position position="160"/>
    </location>
</feature>
<feature type="binding site" evidence="1">
    <location>
        <begin position="9"/>
        <end position="14"/>
    </location>
    <ligand>
        <name>NAD(+)</name>
        <dbReference type="ChEBI" id="CHEBI:57540"/>
    </ligand>
</feature>
<feature type="binding site" evidence="1">
    <location>
        <position position="35"/>
    </location>
    <ligand>
        <name>NAD(+)</name>
        <dbReference type="ChEBI" id="CHEBI:57540"/>
    </ligand>
</feature>
<feature type="binding site" evidence="1">
    <location>
        <position position="36"/>
    </location>
    <ligand>
        <name>NADP(+)</name>
        <dbReference type="ChEBI" id="CHEBI:58349"/>
    </ligand>
</feature>
<feature type="binding site" evidence="1">
    <location>
        <begin position="99"/>
        <end position="101"/>
    </location>
    <ligand>
        <name>NAD(+)</name>
        <dbReference type="ChEBI" id="CHEBI:57540"/>
    </ligand>
</feature>
<feature type="binding site" evidence="1">
    <location>
        <begin position="123"/>
        <end position="126"/>
    </location>
    <ligand>
        <name>NAD(+)</name>
        <dbReference type="ChEBI" id="CHEBI:57540"/>
    </ligand>
</feature>
<feature type="binding site" evidence="1">
    <location>
        <position position="157"/>
    </location>
    <ligand>
        <name>(S)-2,3,4,5-tetrahydrodipicolinate</name>
        <dbReference type="ChEBI" id="CHEBI:16845"/>
    </ligand>
</feature>
<feature type="binding site" evidence="1">
    <location>
        <begin position="166"/>
        <end position="167"/>
    </location>
    <ligand>
        <name>(S)-2,3,4,5-tetrahydrodipicolinate</name>
        <dbReference type="ChEBI" id="CHEBI:16845"/>
    </ligand>
</feature>
<organism>
    <name type="scientific">Pasteurella multocida (strain Pm70)</name>
    <dbReference type="NCBI Taxonomy" id="272843"/>
    <lineage>
        <taxon>Bacteria</taxon>
        <taxon>Pseudomonadati</taxon>
        <taxon>Pseudomonadota</taxon>
        <taxon>Gammaproteobacteria</taxon>
        <taxon>Pasteurellales</taxon>
        <taxon>Pasteurellaceae</taxon>
        <taxon>Pasteurella</taxon>
    </lineage>
</organism>
<comment type="function">
    <text evidence="1">Catalyzes the conversion of 4-hydroxy-tetrahydrodipicolinate (HTPA) to tetrahydrodipicolinate.</text>
</comment>
<comment type="catalytic activity">
    <reaction evidence="1">
        <text>(S)-2,3,4,5-tetrahydrodipicolinate + NAD(+) + H2O = (2S,4S)-4-hydroxy-2,3,4,5-tetrahydrodipicolinate + NADH + H(+)</text>
        <dbReference type="Rhea" id="RHEA:35323"/>
        <dbReference type="ChEBI" id="CHEBI:15377"/>
        <dbReference type="ChEBI" id="CHEBI:15378"/>
        <dbReference type="ChEBI" id="CHEBI:16845"/>
        <dbReference type="ChEBI" id="CHEBI:57540"/>
        <dbReference type="ChEBI" id="CHEBI:57945"/>
        <dbReference type="ChEBI" id="CHEBI:67139"/>
        <dbReference type="EC" id="1.17.1.8"/>
    </reaction>
</comment>
<comment type="catalytic activity">
    <reaction evidence="1">
        <text>(S)-2,3,4,5-tetrahydrodipicolinate + NADP(+) + H2O = (2S,4S)-4-hydroxy-2,3,4,5-tetrahydrodipicolinate + NADPH + H(+)</text>
        <dbReference type="Rhea" id="RHEA:35331"/>
        <dbReference type="ChEBI" id="CHEBI:15377"/>
        <dbReference type="ChEBI" id="CHEBI:15378"/>
        <dbReference type="ChEBI" id="CHEBI:16845"/>
        <dbReference type="ChEBI" id="CHEBI:57783"/>
        <dbReference type="ChEBI" id="CHEBI:58349"/>
        <dbReference type="ChEBI" id="CHEBI:67139"/>
        <dbReference type="EC" id="1.17.1.8"/>
    </reaction>
</comment>
<comment type="pathway">
    <text evidence="1">Amino-acid biosynthesis; L-lysine biosynthesis via DAP pathway; (S)-tetrahydrodipicolinate from L-aspartate: step 4/4.</text>
</comment>
<comment type="subcellular location">
    <subcellularLocation>
        <location evidence="1">Cytoplasm</location>
    </subcellularLocation>
</comment>
<comment type="similarity">
    <text evidence="1">Belongs to the DapB family.</text>
</comment>
<comment type="caution">
    <text evidence="2">Was originally thought to be a dihydrodipicolinate reductase (DHDPR), catalyzing the conversion of dihydrodipicolinate to tetrahydrodipicolinate. However, it was shown in E.coli that the substrate of the enzymatic reaction is not dihydrodipicolinate (DHDP) but in fact (2S,4S)-4-hydroxy-2,3,4,5-tetrahydrodipicolinic acid (HTPA), the product released by the DapA-catalyzed reaction.</text>
</comment>
<sequence length="270" mass="29027">MTLRVAIVGAGGRMGRQLIQAVSETEGVVLGAAFERQGSSLLGADAGELANVGHLGVQITDDLASQQDQFDLLIDFTRPEGTLAHLAFCVAQHKNMVIGTTGFDDDGKAKIQQAADSIGIVFASNFSVGVNLVFKLLEKAAKVMGDYCDIEIIEAHHRHKVDAPSGTALSMGEHIAKTLGRDLKTHGVFTRDGITGERKRDEIGFATIRASDVVGEHSVWFADIGERVEIAHKATSRMTFAKGAVRAAKWLAQKEKGLFDMTDVLDLNQL</sequence>